<keyword id="KW-0002">3D-structure</keyword>
<keyword id="KW-0007">Acetylation</keyword>
<keyword id="KW-0249">Electron transport</keyword>
<keyword id="KW-0472">Membrane</keyword>
<keyword id="KW-0496">Mitochondrion</keyword>
<keyword id="KW-0999">Mitochondrion inner membrane</keyword>
<keyword id="KW-1185">Reference proteome</keyword>
<keyword id="KW-0679">Respiratory chain</keyword>
<keyword id="KW-0813">Transport</keyword>
<proteinExistence type="evidence at protein level"/>
<protein>
    <recommendedName>
        <fullName>NADH dehydrogenase [ubiquinone] 1 alpha subcomplex subunit 12</fullName>
    </recommendedName>
    <alternativeName>
        <fullName>Complex I-B17.2</fullName>
        <shortName>CI-B17.2</shortName>
        <shortName>CIB17.2</shortName>
    </alternativeName>
    <alternativeName>
        <fullName>NADH-ubiquinone oxidoreductase subunit B17.2</fullName>
    </alternativeName>
</protein>
<organism>
    <name type="scientific">Mus musculus</name>
    <name type="common">Mouse</name>
    <dbReference type="NCBI Taxonomy" id="10090"/>
    <lineage>
        <taxon>Eukaryota</taxon>
        <taxon>Metazoa</taxon>
        <taxon>Chordata</taxon>
        <taxon>Craniata</taxon>
        <taxon>Vertebrata</taxon>
        <taxon>Euteleostomi</taxon>
        <taxon>Mammalia</taxon>
        <taxon>Eutheria</taxon>
        <taxon>Euarchontoglires</taxon>
        <taxon>Glires</taxon>
        <taxon>Rodentia</taxon>
        <taxon>Myomorpha</taxon>
        <taxon>Muroidea</taxon>
        <taxon>Muridae</taxon>
        <taxon>Murinae</taxon>
        <taxon>Mus</taxon>
        <taxon>Mus</taxon>
    </lineage>
</organism>
<dbReference type="EMBL" id="AK010460">
    <property type="protein sequence ID" value="BAB26955.2"/>
    <property type="status" value="ALT_INIT"/>
    <property type="molecule type" value="mRNA"/>
</dbReference>
<dbReference type="EMBL" id="AK167943">
    <property type="protein sequence ID" value="BAE39946.1"/>
    <property type="molecule type" value="mRNA"/>
</dbReference>
<dbReference type="CCDS" id="CCDS24132.2"/>
<dbReference type="RefSeq" id="NP_079827.2">
    <property type="nucleotide sequence ID" value="NM_025551.3"/>
</dbReference>
<dbReference type="PDB" id="6G2J">
    <property type="method" value="EM"/>
    <property type="resolution" value="3.30 A"/>
    <property type="chains" value="q=2-145"/>
</dbReference>
<dbReference type="PDB" id="6G72">
    <property type="method" value="EM"/>
    <property type="resolution" value="3.90 A"/>
    <property type="chains" value="q=2-145"/>
</dbReference>
<dbReference type="PDB" id="6ZR2">
    <property type="method" value="EM"/>
    <property type="resolution" value="3.10 A"/>
    <property type="chains" value="q=1-145"/>
</dbReference>
<dbReference type="PDB" id="6ZTQ">
    <property type="method" value="EM"/>
    <property type="resolution" value="3.00 A"/>
    <property type="chains" value="q=1-145"/>
</dbReference>
<dbReference type="PDB" id="7AK5">
    <property type="method" value="EM"/>
    <property type="resolution" value="3.17 A"/>
    <property type="chains" value="q=1-145"/>
</dbReference>
<dbReference type="PDB" id="7AK6">
    <property type="method" value="EM"/>
    <property type="resolution" value="3.82 A"/>
    <property type="chains" value="q=1-145"/>
</dbReference>
<dbReference type="PDB" id="7B93">
    <property type="method" value="EM"/>
    <property type="resolution" value="3.04 A"/>
    <property type="chains" value="q=1-145"/>
</dbReference>
<dbReference type="PDB" id="7PSA">
    <property type="method" value="EM"/>
    <property type="resolution" value="3.40 A"/>
    <property type="chains" value="q=1-145"/>
</dbReference>
<dbReference type="PDB" id="8IAO">
    <property type="method" value="EM"/>
    <property type="resolution" value="4.20 A"/>
    <property type="chains" value="q=1-145"/>
</dbReference>
<dbReference type="PDB" id="8IAP">
    <property type="method" value="EM"/>
    <property type="resolution" value="3.20 A"/>
    <property type="chains" value="q=1-145"/>
</dbReference>
<dbReference type="PDB" id="8IB4">
    <property type="method" value="EM"/>
    <property type="resolution" value="4.30 A"/>
    <property type="chains" value="q=1-145"/>
</dbReference>
<dbReference type="PDB" id="8IB5">
    <property type="method" value="EM"/>
    <property type="resolution" value="3.30 A"/>
    <property type="chains" value="q=1-145"/>
</dbReference>
<dbReference type="PDB" id="8IB9">
    <property type="method" value="EM"/>
    <property type="resolution" value="4.30 A"/>
    <property type="chains" value="q=1-145"/>
</dbReference>
<dbReference type="PDB" id="8IBA">
    <property type="method" value="EM"/>
    <property type="resolution" value="3.20 A"/>
    <property type="chains" value="q=1-145"/>
</dbReference>
<dbReference type="PDB" id="8IBD">
    <property type="method" value="EM"/>
    <property type="resolution" value="4.20 A"/>
    <property type="chains" value="q=1-145"/>
</dbReference>
<dbReference type="PDB" id="8IBE">
    <property type="method" value="EM"/>
    <property type="resolution" value="3.30 A"/>
    <property type="chains" value="q=1-145"/>
</dbReference>
<dbReference type="PDB" id="8IC2">
    <property type="method" value="EM"/>
    <property type="resolution" value="6.30 A"/>
    <property type="chains" value="q=1-145"/>
</dbReference>
<dbReference type="PDB" id="8IC3">
    <property type="method" value="EM"/>
    <property type="resolution" value="3.20 A"/>
    <property type="chains" value="q=1-145"/>
</dbReference>
<dbReference type="PDB" id="8OLT">
    <property type="method" value="EM"/>
    <property type="resolution" value="2.84 A"/>
    <property type="chains" value="q=1-145"/>
</dbReference>
<dbReference type="PDB" id="8OM1">
    <property type="method" value="EM"/>
    <property type="resolution" value="2.39 A"/>
    <property type="chains" value="q=1-145"/>
</dbReference>
<dbReference type="PDB" id="8PW5">
    <property type="method" value="EM"/>
    <property type="resolution" value="3.60 A"/>
    <property type="chains" value="q1=1-145"/>
</dbReference>
<dbReference type="PDB" id="8PW6">
    <property type="method" value="EM"/>
    <property type="resolution" value="3.30 A"/>
    <property type="chains" value="q1=1-145"/>
</dbReference>
<dbReference type="PDB" id="8PW7">
    <property type="method" value="EM"/>
    <property type="resolution" value="3.50 A"/>
    <property type="chains" value="q1=1-145"/>
</dbReference>
<dbReference type="PDB" id="8RGP">
    <property type="method" value="EM"/>
    <property type="resolution" value="3.00 A"/>
    <property type="chains" value="q=1-145"/>
</dbReference>
<dbReference type="PDB" id="8RGQ">
    <property type="method" value="EM"/>
    <property type="resolution" value="3.00 A"/>
    <property type="chains" value="q=1-145"/>
</dbReference>
<dbReference type="PDB" id="8RGR">
    <property type="method" value="EM"/>
    <property type="resolution" value="2.90 A"/>
    <property type="chains" value="q=1-145"/>
</dbReference>
<dbReference type="PDB" id="8RGT">
    <property type="method" value="EM"/>
    <property type="resolution" value="3.10 A"/>
    <property type="chains" value="q=1-145"/>
</dbReference>
<dbReference type="PDB" id="8UCA">
    <property type="method" value="EM"/>
    <property type="resolution" value="3.70 A"/>
    <property type="chains" value="AN/an=1-145"/>
</dbReference>
<dbReference type="PDB" id="8XNL">
    <property type="method" value="EM"/>
    <property type="resolution" value="3.10 A"/>
    <property type="chains" value="q=1-145"/>
</dbReference>
<dbReference type="PDB" id="8XNM">
    <property type="method" value="EM"/>
    <property type="resolution" value="3.50 A"/>
    <property type="chains" value="q=1-145"/>
</dbReference>
<dbReference type="PDB" id="8XNN">
    <property type="method" value="EM"/>
    <property type="resolution" value="3.60 A"/>
    <property type="chains" value="q=1-145"/>
</dbReference>
<dbReference type="PDB" id="8XNO">
    <property type="method" value="EM"/>
    <property type="resolution" value="3.40 A"/>
    <property type="chains" value="q=1-145"/>
</dbReference>
<dbReference type="PDB" id="8XNP">
    <property type="method" value="EM"/>
    <property type="resolution" value="3.50 A"/>
    <property type="chains" value="q=1-145"/>
</dbReference>
<dbReference type="PDB" id="8XNQ">
    <property type="method" value="EM"/>
    <property type="resolution" value="3.70 A"/>
    <property type="chains" value="q=1-145"/>
</dbReference>
<dbReference type="PDB" id="8XNR">
    <property type="method" value="EM"/>
    <property type="resolution" value="3.30 A"/>
    <property type="chains" value="q=1-145"/>
</dbReference>
<dbReference type="PDB" id="8XNS">
    <property type="method" value="EM"/>
    <property type="resolution" value="3.50 A"/>
    <property type="chains" value="q=1-145"/>
</dbReference>
<dbReference type="PDB" id="8XNT">
    <property type="method" value="EM"/>
    <property type="resolution" value="4.10 A"/>
    <property type="chains" value="q=1-145"/>
</dbReference>
<dbReference type="PDB" id="8XNU">
    <property type="method" value="EM"/>
    <property type="resolution" value="3.60 A"/>
    <property type="chains" value="q=1-145"/>
</dbReference>
<dbReference type="PDB" id="8XNV">
    <property type="method" value="EM"/>
    <property type="resolution" value="3.30 A"/>
    <property type="chains" value="q=1-145"/>
</dbReference>
<dbReference type="PDB" id="8XNW">
    <property type="method" value="EM"/>
    <property type="resolution" value="3.60 A"/>
    <property type="chains" value="q=1-145"/>
</dbReference>
<dbReference type="PDB" id="8XNX">
    <property type="method" value="EM"/>
    <property type="resolution" value="3.50 A"/>
    <property type="chains" value="q=1-145"/>
</dbReference>
<dbReference type="PDB" id="8XNY">
    <property type="method" value="EM"/>
    <property type="resolution" value="4.10 A"/>
    <property type="chains" value="q=1-145"/>
</dbReference>
<dbReference type="PDB" id="8XNZ">
    <property type="method" value="EM"/>
    <property type="resolution" value="3.30 A"/>
    <property type="chains" value="q=1-145"/>
</dbReference>
<dbReference type="PDB" id="8XO0">
    <property type="method" value="EM"/>
    <property type="resolution" value="4.20 A"/>
    <property type="chains" value="q=1-145"/>
</dbReference>
<dbReference type="PDBsum" id="6G2J"/>
<dbReference type="PDBsum" id="6G72"/>
<dbReference type="PDBsum" id="6ZR2"/>
<dbReference type="PDBsum" id="6ZTQ"/>
<dbReference type="PDBsum" id="7AK5"/>
<dbReference type="PDBsum" id="7AK6"/>
<dbReference type="PDBsum" id="7B93"/>
<dbReference type="PDBsum" id="7PSA"/>
<dbReference type="PDBsum" id="8IAO"/>
<dbReference type="PDBsum" id="8IAP"/>
<dbReference type="PDBsum" id="8IB4"/>
<dbReference type="PDBsum" id="8IB5"/>
<dbReference type="PDBsum" id="8IB9"/>
<dbReference type="PDBsum" id="8IBA"/>
<dbReference type="PDBsum" id="8IBD"/>
<dbReference type="PDBsum" id="8IBE"/>
<dbReference type="PDBsum" id="8IC2"/>
<dbReference type="PDBsum" id="8IC3"/>
<dbReference type="PDBsum" id="8OLT"/>
<dbReference type="PDBsum" id="8OM1"/>
<dbReference type="PDBsum" id="8PW5"/>
<dbReference type="PDBsum" id="8PW6"/>
<dbReference type="PDBsum" id="8PW7"/>
<dbReference type="PDBsum" id="8RGP"/>
<dbReference type="PDBsum" id="8RGQ"/>
<dbReference type="PDBsum" id="8RGR"/>
<dbReference type="PDBsum" id="8RGT"/>
<dbReference type="PDBsum" id="8UCA"/>
<dbReference type="PDBsum" id="8XNL"/>
<dbReference type="PDBsum" id="8XNM"/>
<dbReference type="PDBsum" id="8XNN"/>
<dbReference type="PDBsum" id="8XNO"/>
<dbReference type="PDBsum" id="8XNP"/>
<dbReference type="PDBsum" id="8XNQ"/>
<dbReference type="PDBsum" id="8XNR"/>
<dbReference type="PDBsum" id="8XNS"/>
<dbReference type="PDBsum" id="8XNT"/>
<dbReference type="PDBsum" id="8XNU"/>
<dbReference type="PDBsum" id="8XNV"/>
<dbReference type="PDBsum" id="8XNW"/>
<dbReference type="PDBsum" id="8XNX"/>
<dbReference type="PDBsum" id="8XNY"/>
<dbReference type="PDBsum" id="8XNZ"/>
<dbReference type="PDBsum" id="8XO0"/>
<dbReference type="EMDB" id="EMD-11377"/>
<dbReference type="EMDB" id="EMD-11424"/>
<dbReference type="EMDB" id="EMD-11810"/>
<dbReference type="EMDB" id="EMD-11811"/>
<dbReference type="EMDB" id="EMD-12095"/>
<dbReference type="EMDB" id="EMD-13611"/>
<dbReference type="EMDB" id="EMD-16962"/>
<dbReference type="EMDB" id="EMD-16965"/>
<dbReference type="EMDB" id="EMD-17989"/>
<dbReference type="EMDB" id="EMD-17990"/>
<dbReference type="EMDB" id="EMD-17991"/>
<dbReference type="EMDB" id="EMD-19145"/>
<dbReference type="EMDB" id="EMD-19146"/>
<dbReference type="EMDB" id="EMD-19147"/>
<dbReference type="EMDB" id="EMD-19148"/>
<dbReference type="EMDB" id="EMD-35313"/>
<dbReference type="EMDB" id="EMD-35314"/>
<dbReference type="EMDB" id="EMD-35331"/>
<dbReference type="EMDB" id="EMD-35332"/>
<dbReference type="EMDB" id="EMD-35336"/>
<dbReference type="EMDB" id="EMD-35337"/>
<dbReference type="EMDB" id="EMD-35340"/>
<dbReference type="EMDB" id="EMD-35341"/>
<dbReference type="EMDB" id="EMD-35352"/>
<dbReference type="EMDB" id="EMD-35353"/>
<dbReference type="EMDB" id="EMD-38506"/>
<dbReference type="EMDB" id="EMD-38507"/>
<dbReference type="EMDB" id="EMD-38508"/>
<dbReference type="EMDB" id="EMD-38509"/>
<dbReference type="EMDB" id="EMD-38510"/>
<dbReference type="EMDB" id="EMD-38511"/>
<dbReference type="EMDB" id="EMD-38512"/>
<dbReference type="EMDB" id="EMD-38513"/>
<dbReference type="EMDB" id="EMD-38514"/>
<dbReference type="EMDB" id="EMD-38515"/>
<dbReference type="EMDB" id="EMD-38516"/>
<dbReference type="EMDB" id="EMD-38517"/>
<dbReference type="EMDB" id="EMD-38518"/>
<dbReference type="EMDB" id="EMD-38519"/>
<dbReference type="EMDB" id="EMD-38520"/>
<dbReference type="EMDB" id="EMD-38521"/>
<dbReference type="EMDB" id="EMD-42122"/>
<dbReference type="EMDB" id="EMD-4345"/>
<dbReference type="EMDB" id="EMD-4356"/>
<dbReference type="SMR" id="Q7TMF3"/>
<dbReference type="BioGRID" id="211458">
    <property type="interactions" value="48"/>
</dbReference>
<dbReference type="ComplexPortal" id="CPX-266">
    <property type="entry name" value="Mitochondrial respiratory chain complex I"/>
</dbReference>
<dbReference type="CORUM" id="Q7TMF3"/>
<dbReference type="FunCoup" id="Q7TMF3">
    <property type="interactions" value="2052"/>
</dbReference>
<dbReference type="IntAct" id="Q7TMF3">
    <property type="interactions" value="5"/>
</dbReference>
<dbReference type="STRING" id="10090.ENSMUSP00000136313"/>
<dbReference type="GlyGen" id="Q7TMF3">
    <property type="glycosylation" value="1 site, 1 O-linked glycan (1 site)"/>
</dbReference>
<dbReference type="iPTMnet" id="Q7TMF3"/>
<dbReference type="PhosphoSitePlus" id="Q7TMF3"/>
<dbReference type="SwissPalm" id="Q7TMF3"/>
<dbReference type="jPOST" id="Q7TMF3"/>
<dbReference type="PaxDb" id="10090-ENSMUSP00000136313"/>
<dbReference type="PeptideAtlas" id="Q7TMF3"/>
<dbReference type="ProteomicsDB" id="293537"/>
<dbReference type="Pumba" id="Q7TMF3"/>
<dbReference type="Antibodypedia" id="30095">
    <property type="antibodies" value="166 antibodies from 28 providers"/>
</dbReference>
<dbReference type="DNASU" id="66414"/>
<dbReference type="Ensembl" id="ENSMUST00000020209.16">
    <property type="protein sequence ID" value="ENSMUSP00000020209.10"/>
    <property type="gene ID" value="ENSMUSG00000020022.18"/>
</dbReference>
<dbReference type="GeneID" id="66414"/>
<dbReference type="KEGG" id="mmu:66414"/>
<dbReference type="AGR" id="MGI:1913664"/>
<dbReference type="CTD" id="55967"/>
<dbReference type="MGI" id="MGI:1913664">
    <property type="gene designation" value="Ndufa12"/>
</dbReference>
<dbReference type="VEuPathDB" id="HostDB:ENSMUSG00000020022"/>
<dbReference type="eggNOG" id="KOG3382">
    <property type="taxonomic scope" value="Eukaryota"/>
</dbReference>
<dbReference type="GeneTree" id="ENSGT00390000005848"/>
<dbReference type="HOGENOM" id="CLU_110455_1_0_1"/>
<dbReference type="InParanoid" id="Q7TMF3"/>
<dbReference type="OrthoDB" id="274641at2759"/>
<dbReference type="TreeFam" id="TF106106"/>
<dbReference type="Reactome" id="R-MMU-611105">
    <property type="pathway name" value="Respiratory electron transport"/>
</dbReference>
<dbReference type="Reactome" id="R-MMU-6799198">
    <property type="pathway name" value="Complex I biogenesis"/>
</dbReference>
<dbReference type="BioGRID-ORCS" id="66414">
    <property type="hits" value="0 hits in 62 CRISPR screens"/>
</dbReference>
<dbReference type="ChiTaRS" id="Ndufa12">
    <property type="organism name" value="mouse"/>
</dbReference>
<dbReference type="PRO" id="PR:Q7TMF3"/>
<dbReference type="Proteomes" id="UP000000589">
    <property type="component" value="Chromosome 10"/>
</dbReference>
<dbReference type="RNAct" id="Q7TMF3">
    <property type="molecule type" value="protein"/>
</dbReference>
<dbReference type="Bgee" id="ENSMUSG00000020022">
    <property type="expression patterns" value="Expressed in right kidney and 90 other cell types or tissues"/>
</dbReference>
<dbReference type="ExpressionAtlas" id="Q7TMF3">
    <property type="expression patterns" value="baseline and differential"/>
</dbReference>
<dbReference type="GO" id="GO:0005743">
    <property type="term" value="C:mitochondrial inner membrane"/>
    <property type="evidence" value="ECO:0000314"/>
    <property type="project" value="UniProtKB"/>
</dbReference>
<dbReference type="GO" id="GO:0005739">
    <property type="term" value="C:mitochondrion"/>
    <property type="evidence" value="ECO:0000314"/>
    <property type="project" value="UniProtKB"/>
</dbReference>
<dbReference type="GO" id="GO:0045271">
    <property type="term" value="C:respiratory chain complex I"/>
    <property type="evidence" value="ECO:0000314"/>
    <property type="project" value="UniProtKB"/>
</dbReference>
<dbReference type="GO" id="GO:0009060">
    <property type="term" value="P:aerobic respiration"/>
    <property type="evidence" value="ECO:0000303"/>
    <property type="project" value="ComplexPortal"/>
</dbReference>
<dbReference type="GO" id="GO:0042775">
    <property type="term" value="P:mitochondrial ATP synthesis coupled electron transport"/>
    <property type="evidence" value="ECO:0007669"/>
    <property type="project" value="Ensembl"/>
</dbReference>
<dbReference type="GO" id="GO:0042776">
    <property type="term" value="P:proton motive force-driven mitochondrial ATP synthesis"/>
    <property type="evidence" value="ECO:0000303"/>
    <property type="project" value="ComplexPortal"/>
</dbReference>
<dbReference type="InterPro" id="IPR007763">
    <property type="entry name" value="NDUFA12"/>
</dbReference>
<dbReference type="PANTHER" id="PTHR12910:SF2">
    <property type="entry name" value="NADH DEHYDROGENASE [UBIQUINONE] 1 ALPHA SUBCOMPLEX SUBUNIT 12"/>
    <property type="match status" value="1"/>
</dbReference>
<dbReference type="PANTHER" id="PTHR12910">
    <property type="entry name" value="NADH-UBIQUINONE OXIDOREDUCTASE SUBUNIT B17.2"/>
    <property type="match status" value="1"/>
</dbReference>
<dbReference type="Pfam" id="PF05071">
    <property type="entry name" value="NDUFA12"/>
    <property type="match status" value="1"/>
</dbReference>
<name>NDUAC_MOUSE</name>
<accession>Q7TMF3</accession>
<accession>Q3TIA0</accession>
<evidence type="ECO:0000250" key="1">
    <source>
        <dbReference type="UniProtKB" id="O97725"/>
    </source>
</evidence>
<evidence type="ECO:0000269" key="2">
    <source>
    </source>
</evidence>
<evidence type="ECO:0000305" key="3"/>
<evidence type="ECO:0007744" key="4">
    <source>
        <dbReference type="PDB" id="8PW5"/>
    </source>
</evidence>
<evidence type="ECO:0007829" key="5">
    <source>
        <dbReference type="PDB" id="6G2J"/>
    </source>
</evidence>
<evidence type="ECO:0007829" key="6">
    <source>
        <dbReference type="PDB" id="6ZTQ"/>
    </source>
</evidence>
<evidence type="ECO:0007829" key="7">
    <source>
        <dbReference type="PDB" id="8IBA"/>
    </source>
</evidence>
<evidence type="ECO:0007829" key="8">
    <source>
        <dbReference type="PDB" id="8IC3"/>
    </source>
</evidence>
<evidence type="ECO:0007829" key="9">
    <source>
        <dbReference type="PDB" id="8OM1"/>
    </source>
</evidence>
<evidence type="ECO:0007829" key="10">
    <source>
        <dbReference type="PDB" id="8RGR"/>
    </source>
</evidence>
<sequence>MELVEVLKRGVQQVTGHGGLRGLLRVFFRANDIRIGTLVGEDKYGNKYYEDNKQFFGRHRWVIYTTEMNGKNTFWDVDGSMVPPEWHRWLHCMTDDPPTTNPPTARKFIWTNHKFNVSATPEQYVPYSTTRKKIHEWVPPSTPYK</sequence>
<comment type="function">
    <text evidence="2">Accessory subunit of the mitochondrial membrane respiratory chain NADH dehydrogenase (Complex I), that is believed not to be involved in catalysis. Complex I functions in the transfer of electrons from NADH to the respiratory chain. The immediate electron acceptor for the enzyme is believed to be ubiquinone.</text>
</comment>
<comment type="subunit">
    <text evidence="2">Complex I is composed of 45 different subunits.</text>
</comment>
<comment type="subcellular location">
    <subcellularLocation>
        <location evidence="2">Mitochondrion inner membrane</location>
        <topology evidence="2">Peripheral membrane protein</topology>
        <orientation evidence="2">Matrix side</orientation>
    </subcellularLocation>
</comment>
<comment type="similarity">
    <text evidence="3">Belongs to the complex I NDUFA12 subunit family.</text>
</comment>
<comment type="sequence caution" evidence="3">
    <conflict type="erroneous initiation">
        <sequence resource="EMBL-CDS" id="BAB26955"/>
    </conflict>
</comment>
<gene>
    <name type="primary">Ndufa12</name>
</gene>
<feature type="chain" id="PRO_0000118846" description="NADH dehydrogenase [ubiquinone] 1 alpha subcomplex subunit 12">
    <location>
        <begin position="1"/>
        <end position="145"/>
    </location>
</feature>
<feature type="modified residue" description="N-acetylmethionine" evidence="1">
    <location>
        <position position="1"/>
    </location>
</feature>
<feature type="helix" evidence="9">
    <location>
        <begin position="3"/>
        <end position="15"/>
    </location>
</feature>
<feature type="strand" evidence="9">
    <location>
        <begin position="16"/>
        <end position="18"/>
    </location>
</feature>
<feature type="helix" evidence="9">
    <location>
        <begin position="19"/>
        <end position="30"/>
    </location>
</feature>
<feature type="strand" evidence="9">
    <location>
        <begin position="37"/>
        <end position="41"/>
    </location>
</feature>
<feature type="strand" evidence="6">
    <location>
        <begin position="43"/>
        <end position="45"/>
    </location>
</feature>
<feature type="strand" evidence="9">
    <location>
        <begin position="47"/>
        <end position="50"/>
    </location>
</feature>
<feature type="strand" evidence="7">
    <location>
        <begin position="52"/>
        <end position="54"/>
    </location>
</feature>
<feature type="turn" evidence="9">
    <location>
        <begin position="56"/>
        <end position="58"/>
    </location>
</feature>
<feature type="strand" evidence="9">
    <location>
        <begin position="59"/>
        <end position="63"/>
    </location>
</feature>
<feature type="strand" evidence="9">
    <location>
        <begin position="66"/>
        <end position="68"/>
    </location>
</feature>
<feature type="strand" evidence="5">
    <location>
        <begin position="69"/>
        <end position="71"/>
    </location>
</feature>
<feature type="turn" evidence="10">
    <location>
        <begin position="73"/>
        <end position="75"/>
    </location>
</feature>
<feature type="helix" evidence="9">
    <location>
        <begin position="79"/>
        <end position="81"/>
    </location>
</feature>
<feature type="helix" evidence="9">
    <location>
        <begin position="84"/>
        <end position="90"/>
    </location>
</feature>
<feature type="strand" evidence="10">
    <location>
        <begin position="93"/>
        <end position="96"/>
    </location>
</feature>
<feature type="turn" evidence="9">
    <location>
        <begin position="98"/>
        <end position="100"/>
    </location>
</feature>
<feature type="strand" evidence="6">
    <location>
        <begin position="107"/>
        <end position="109"/>
    </location>
</feature>
<feature type="strand" evidence="6">
    <location>
        <begin position="118"/>
        <end position="122"/>
    </location>
</feature>
<feature type="strand" evidence="8">
    <location>
        <begin position="134"/>
        <end position="136"/>
    </location>
</feature>
<reference key="1">
    <citation type="journal article" date="2005" name="Science">
        <title>The transcriptional landscape of the mammalian genome.</title>
        <authorList>
            <person name="Carninci P."/>
            <person name="Kasukawa T."/>
            <person name="Katayama S."/>
            <person name="Gough J."/>
            <person name="Frith M.C."/>
            <person name="Maeda N."/>
            <person name="Oyama R."/>
            <person name="Ravasi T."/>
            <person name="Lenhard B."/>
            <person name="Wells C."/>
            <person name="Kodzius R."/>
            <person name="Shimokawa K."/>
            <person name="Bajic V.B."/>
            <person name="Brenner S.E."/>
            <person name="Batalov S."/>
            <person name="Forrest A.R."/>
            <person name="Zavolan M."/>
            <person name="Davis M.J."/>
            <person name="Wilming L.G."/>
            <person name="Aidinis V."/>
            <person name="Allen J.E."/>
            <person name="Ambesi-Impiombato A."/>
            <person name="Apweiler R."/>
            <person name="Aturaliya R.N."/>
            <person name="Bailey T.L."/>
            <person name="Bansal M."/>
            <person name="Baxter L."/>
            <person name="Beisel K.W."/>
            <person name="Bersano T."/>
            <person name="Bono H."/>
            <person name="Chalk A.M."/>
            <person name="Chiu K.P."/>
            <person name="Choudhary V."/>
            <person name="Christoffels A."/>
            <person name="Clutterbuck D.R."/>
            <person name="Crowe M.L."/>
            <person name="Dalla E."/>
            <person name="Dalrymple B.P."/>
            <person name="de Bono B."/>
            <person name="Della Gatta G."/>
            <person name="di Bernardo D."/>
            <person name="Down T."/>
            <person name="Engstrom P."/>
            <person name="Fagiolini M."/>
            <person name="Faulkner G."/>
            <person name="Fletcher C.F."/>
            <person name="Fukushima T."/>
            <person name="Furuno M."/>
            <person name="Futaki S."/>
            <person name="Gariboldi M."/>
            <person name="Georgii-Hemming P."/>
            <person name="Gingeras T.R."/>
            <person name="Gojobori T."/>
            <person name="Green R.E."/>
            <person name="Gustincich S."/>
            <person name="Harbers M."/>
            <person name="Hayashi Y."/>
            <person name="Hensch T.K."/>
            <person name="Hirokawa N."/>
            <person name="Hill D."/>
            <person name="Huminiecki L."/>
            <person name="Iacono M."/>
            <person name="Ikeo K."/>
            <person name="Iwama A."/>
            <person name="Ishikawa T."/>
            <person name="Jakt M."/>
            <person name="Kanapin A."/>
            <person name="Katoh M."/>
            <person name="Kawasawa Y."/>
            <person name="Kelso J."/>
            <person name="Kitamura H."/>
            <person name="Kitano H."/>
            <person name="Kollias G."/>
            <person name="Krishnan S.P."/>
            <person name="Kruger A."/>
            <person name="Kummerfeld S.K."/>
            <person name="Kurochkin I.V."/>
            <person name="Lareau L.F."/>
            <person name="Lazarevic D."/>
            <person name="Lipovich L."/>
            <person name="Liu J."/>
            <person name="Liuni S."/>
            <person name="McWilliam S."/>
            <person name="Madan Babu M."/>
            <person name="Madera M."/>
            <person name="Marchionni L."/>
            <person name="Matsuda H."/>
            <person name="Matsuzawa S."/>
            <person name="Miki H."/>
            <person name="Mignone F."/>
            <person name="Miyake S."/>
            <person name="Morris K."/>
            <person name="Mottagui-Tabar S."/>
            <person name="Mulder N."/>
            <person name="Nakano N."/>
            <person name="Nakauchi H."/>
            <person name="Ng P."/>
            <person name="Nilsson R."/>
            <person name="Nishiguchi S."/>
            <person name="Nishikawa S."/>
            <person name="Nori F."/>
            <person name="Ohara O."/>
            <person name="Okazaki Y."/>
            <person name="Orlando V."/>
            <person name="Pang K.C."/>
            <person name="Pavan W.J."/>
            <person name="Pavesi G."/>
            <person name="Pesole G."/>
            <person name="Petrovsky N."/>
            <person name="Piazza S."/>
            <person name="Reed J."/>
            <person name="Reid J.F."/>
            <person name="Ring B.Z."/>
            <person name="Ringwald M."/>
            <person name="Rost B."/>
            <person name="Ruan Y."/>
            <person name="Salzberg S.L."/>
            <person name="Sandelin A."/>
            <person name="Schneider C."/>
            <person name="Schoenbach C."/>
            <person name="Sekiguchi K."/>
            <person name="Semple C.A."/>
            <person name="Seno S."/>
            <person name="Sessa L."/>
            <person name="Sheng Y."/>
            <person name="Shibata Y."/>
            <person name="Shimada H."/>
            <person name="Shimada K."/>
            <person name="Silva D."/>
            <person name="Sinclair B."/>
            <person name="Sperling S."/>
            <person name="Stupka E."/>
            <person name="Sugiura K."/>
            <person name="Sultana R."/>
            <person name="Takenaka Y."/>
            <person name="Taki K."/>
            <person name="Tammoja K."/>
            <person name="Tan S.L."/>
            <person name="Tang S."/>
            <person name="Taylor M.S."/>
            <person name="Tegner J."/>
            <person name="Teichmann S.A."/>
            <person name="Ueda H.R."/>
            <person name="van Nimwegen E."/>
            <person name="Verardo R."/>
            <person name="Wei C.L."/>
            <person name="Yagi K."/>
            <person name="Yamanishi H."/>
            <person name="Zabarovsky E."/>
            <person name="Zhu S."/>
            <person name="Zimmer A."/>
            <person name="Hide W."/>
            <person name="Bult C."/>
            <person name="Grimmond S.M."/>
            <person name="Teasdale R.D."/>
            <person name="Liu E.T."/>
            <person name="Brusic V."/>
            <person name="Quackenbush J."/>
            <person name="Wahlestedt C."/>
            <person name="Mattick J.S."/>
            <person name="Hume D.A."/>
            <person name="Kai C."/>
            <person name="Sasaki D."/>
            <person name="Tomaru Y."/>
            <person name="Fukuda S."/>
            <person name="Kanamori-Katayama M."/>
            <person name="Suzuki M."/>
            <person name="Aoki J."/>
            <person name="Arakawa T."/>
            <person name="Iida J."/>
            <person name="Imamura K."/>
            <person name="Itoh M."/>
            <person name="Kato T."/>
            <person name="Kawaji H."/>
            <person name="Kawagashira N."/>
            <person name="Kawashima T."/>
            <person name="Kojima M."/>
            <person name="Kondo S."/>
            <person name="Konno H."/>
            <person name="Nakano K."/>
            <person name="Ninomiya N."/>
            <person name="Nishio T."/>
            <person name="Okada M."/>
            <person name="Plessy C."/>
            <person name="Shibata K."/>
            <person name="Shiraki T."/>
            <person name="Suzuki S."/>
            <person name="Tagami M."/>
            <person name="Waki K."/>
            <person name="Watahiki A."/>
            <person name="Okamura-Oho Y."/>
            <person name="Suzuki H."/>
            <person name="Kawai J."/>
            <person name="Hayashizaki Y."/>
        </authorList>
    </citation>
    <scope>NUCLEOTIDE SEQUENCE [LARGE SCALE MRNA]</scope>
    <source>
        <strain>C57BL/6J</strain>
        <strain>DBA/2J</strain>
    </source>
</reference>
<reference key="2">
    <citation type="journal article" date="2010" name="Cell">
        <title>A tissue-specific atlas of mouse protein phosphorylation and expression.</title>
        <authorList>
            <person name="Huttlin E.L."/>
            <person name="Jedrychowski M.P."/>
            <person name="Elias J.E."/>
            <person name="Goswami T."/>
            <person name="Rad R."/>
            <person name="Beausoleil S.A."/>
            <person name="Villen J."/>
            <person name="Haas W."/>
            <person name="Sowa M.E."/>
            <person name="Gygi S.P."/>
        </authorList>
    </citation>
    <scope>IDENTIFICATION BY MASS SPECTROMETRY [LARGE SCALE ANALYSIS]</scope>
    <source>
        <tissue>Brain</tissue>
        <tissue>Brown adipose tissue</tissue>
        <tissue>Heart</tissue>
        <tissue>Kidney</tissue>
        <tissue>Liver</tissue>
        <tissue>Lung</tissue>
        <tissue>Pancreas</tissue>
        <tissue>Spleen</tissue>
        <tissue>Testis</tissue>
    </source>
</reference>
<reference evidence="4" key="3">
    <citation type="journal article" date="2024" name="Nat. Struct. Mol. Biol.">
        <title>SCAF1 drives the compositional diversity of mammalian respirasomes.</title>
        <authorList>
            <person name="Vercellino I."/>
            <person name="Sazanov L.A."/>
        </authorList>
    </citation>
    <scope>STRUCTURE BY ELECTRON MICROSCOPY (3.60 ANGSTROMS) IN COMPLEX WITH MITOCHONDRIAL RESPIRATORY SUPERCOMPLEX</scope>
    <scope>FUNCTION</scope>
    <scope>SUBCELLULAR LOCATION</scope>
    <scope>SUBUNIT</scope>
</reference>